<reference key="1">
    <citation type="journal article" date="2011" name="MBio">
        <title>Novel metabolic attributes of the genus Cyanothece, comprising a group of unicellular nitrogen-fixing Cyanobacteria.</title>
        <authorList>
            <person name="Bandyopadhyay A."/>
            <person name="Elvitigala T."/>
            <person name="Welsh E."/>
            <person name="Stockel J."/>
            <person name="Liberton M."/>
            <person name="Min H."/>
            <person name="Sherman L.A."/>
            <person name="Pakrasi H.B."/>
        </authorList>
    </citation>
    <scope>NUCLEOTIDE SEQUENCE [LARGE SCALE GENOMIC DNA]</scope>
    <source>
        <strain>PCC 7425 / ATCC 29141</strain>
    </source>
</reference>
<proteinExistence type="inferred from homology"/>
<keyword id="KW-0067">ATP-binding</keyword>
<keyword id="KW-0436">Ligase</keyword>
<keyword id="KW-0479">Metal-binding</keyword>
<keyword id="KW-0547">Nucleotide-binding</keyword>
<keyword id="KW-0671">Queuosine biosynthesis</keyword>
<keyword id="KW-0862">Zinc</keyword>
<gene>
    <name evidence="1" type="primary">queC</name>
    <name type="ordered locus">Cyan7425_5203</name>
</gene>
<feature type="chain" id="PRO_1000186581" description="7-cyano-7-deazaguanine synthase">
    <location>
        <begin position="1"/>
        <end position="229"/>
    </location>
</feature>
<feature type="binding site" evidence="1">
    <location>
        <begin position="7"/>
        <end position="17"/>
    </location>
    <ligand>
        <name>ATP</name>
        <dbReference type="ChEBI" id="CHEBI:30616"/>
    </ligand>
</feature>
<feature type="binding site" evidence="1">
    <location>
        <position position="191"/>
    </location>
    <ligand>
        <name>Zn(2+)</name>
        <dbReference type="ChEBI" id="CHEBI:29105"/>
    </ligand>
</feature>
<feature type="binding site" evidence="1">
    <location>
        <position position="204"/>
    </location>
    <ligand>
        <name>Zn(2+)</name>
        <dbReference type="ChEBI" id="CHEBI:29105"/>
    </ligand>
</feature>
<feature type="binding site" evidence="1">
    <location>
        <position position="207"/>
    </location>
    <ligand>
        <name>Zn(2+)</name>
        <dbReference type="ChEBI" id="CHEBI:29105"/>
    </ligand>
</feature>
<feature type="binding site" evidence="1">
    <location>
        <position position="210"/>
    </location>
    <ligand>
        <name>Zn(2+)</name>
        <dbReference type="ChEBI" id="CHEBI:29105"/>
    </ligand>
</feature>
<accession>B8HQ99</accession>
<sequence>MKIVILLSGGLDSTTVLYLARSLGHDCYALSFNYGQRHKQELAAAIAVAQLAGVIQHQVISFDLGLWGGSALTDYTLDLPQNRAFKEMAEQIPITYVPARNTIFLSFALSYAEAIGATQVYAGMNAIDYSGYPDCRPDYIAAMQEVYRLGTKQGREGEPIQIITPLIDLTKPAIIQLGNRLGVPWAKTWSCYSDGGGNDPPVACGVCDSCRLRLAAFAELSLTDPLPYR</sequence>
<evidence type="ECO:0000255" key="1">
    <source>
        <dbReference type="HAMAP-Rule" id="MF_01633"/>
    </source>
</evidence>
<organism>
    <name type="scientific">Cyanothece sp. (strain PCC 7425 / ATCC 29141)</name>
    <dbReference type="NCBI Taxonomy" id="395961"/>
    <lineage>
        <taxon>Bacteria</taxon>
        <taxon>Bacillati</taxon>
        <taxon>Cyanobacteriota</taxon>
        <taxon>Cyanophyceae</taxon>
        <taxon>Gomontiellales</taxon>
        <taxon>Cyanothecaceae</taxon>
        <taxon>Cyanothece</taxon>
    </lineage>
</organism>
<dbReference type="EC" id="6.3.4.20" evidence="1"/>
<dbReference type="EMBL" id="CP001344">
    <property type="protein sequence ID" value="ACL47496.1"/>
    <property type="molecule type" value="Genomic_DNA"/>
</dbReference>
<dbReference type="SMR" id="B8HQ99"/>
<dbReference type="STRING" id="395961.Cyan7425_5203"/>
<dbReference type="KEGG" id="cyn:Cyan7425_5203"/>
<dbReference type="eggNOG" id="COG0603">
    <property type="taxonomic scope" value="Bacteria"/>
</dbReference>
<dbReference type="HOGENOM" id="CLU_081854_1_0_3"/>
<dbReference type="OrthoDB" id="9789567at2"/>
<dbReference type="UniPathway" id="UPA00391"/>
<dbReference type="GO" id="GO:0005524">
    <property type="term" value="F:ATP binding"/>
    <property type="evidence" value="ECO:0007669"/>
    <property type="project" value="UniProtKB-UniRule"/>
</dbReference>
<dbReference type="GO" id="GO:0016879">
    <property type="term" value="F:ligase activity, forming carbon-nitrogen bonds"/>
    <property type="evidence" value="ECO:0007669"/>
    <property type="project" value="UniProtKB-UniRule"/>
</dbReference>
<dbReference type="GO" id="GO:0008270">
    <property type="term" value="F:zinc ion binding"/>
    <property type="evidence" value="ECO:0007669"/>
    <property type="project" value="UniProtKB-UniRule"/>
</dbReference>
<dbReference type="GO" id="GO:0008616">
    <property type="term" value="P:queuosine biosynthetic process"/>
    <property type="evidence" value="ECO:0007669"/>
    <property type="project" value="UniProtKB-UniRule"/>
</dbReference>
<dbReference type="CDD" id="cd01995">
    <property type="entry name" value="QueC-like"/>
    <property type="match status" value="1"/>
</dbReference>
<dbReference type="Gene3D" id="3.40.50.620">
    <property type="entry name" value="HUPs"/>
    <property type="match status" value="1"/>
</dbReference>
<dbReference type="HAMAP" id="MF_01633">
    <property type="entry name" value="QueC"/>
    <property type="match status" value="1"/>
</dbReference>
<dbReference type="InterPro" id="IPR018317">
    <property type="entry name" value="QueC"/>
</dbReference>
<dbReference type="InterPro" id="IPR014729">
    <property type="entry name" value="Rossmann-like_a/b/a_fold"/>
</dbReference>
<dbReference type="NCBIfam" id="TIGR00364">
    <property type="entry name" value="7-cyano-7-deazaguanine synthase QueC"/>
    <property type="match status" value="1"/>
</dbReference>
<dbReference type="PANTHER" id="PTHR42914">
    <property type="entry name" value="7-CYANO-7-DEAZAGUANINE SYNTHASE"/>
    <property type="match status" value="1"/>
</dbReference>
<dbReference type="PANTHER" id="PTHR42914:SF1">
    <property type="entry name" value="7-CYANO-7-DEAZAGUANINE SYNTHASE"/>
    <property type="match status" value="1"/>
</dbReference>
<dbReference type="Pfam" id="PF06508">
    <property type="entry name" value="QueC"/>
    <property type="match status" value="1"/>
</dbReference>
<dbReference type="PIRSF" id="PIRSF006293">
    <property type="entry name" value="ExsB"/>
    <property type="match status" value="1"/>
</dbReference>
<dbReference type="SUPFAM" id="SSF52402">
    <property type="entry name" value="Adenine nucleotide alpha hydrolases-like"/>
    <property type="match status" value="1"/>
</dbReference>
<name>QUEC_CYAP4</name>
<protein>
    <recommendedName>
        <fullName evidence="1">7-cyano-7-deazaguanine synthase</fullName>
        <ecNumber evidence="1">6.3.4.20</ecNumber>
    </recommendedName>
    <alternativeName>
        <fullName evidence="1">7-cyano-7-carbaguanine synthase</fullName>
    </alternativeName>
    <alternativeName>
        <fullName evidence="1">PreQ(0) synthase</fullName>
    </alternativeName>
    <alternativeName>
        <fullName evidence="1">Queuosine biosynthesis protein QueC</fullName>
    </alternativeName>
</protein>
<comment type="function">
    <text evidence="1">Catalyzes the ATP-dependent conversion of 7-carboxy-7-deazaguanine (CDG) to 7-cyano-7-deazaguanine (preQ(0)).</text>
</comment>
<comment type="catalytic activity">
    <reaction evidence="1">
        <text>7-carboxy-7-deazaguanine + NH4(+) + ATP = 7-cyano-7-deazaguanine + ADP + phosphate + H2O + H(+)</text>
        <dbReference type="Rhea" id="RHEA:27982"/>
        <dbReference type="ChEBI" id="CHEBI:15377"/>
        <dbReference type="ChEBI" id="CHEBI:15378"/>
        <dbReference type="ChEBI" id="CHEBI:28938"/>
        <dbReference type="ChEBI" id="CHEBI:30616"/>
        <dbReference type="ChEBI" id="CHEBI:43474"/>
        <dbReference type="ChEBI" id="CHEBI:45075"/>
        <dbReference type="ChEBI" id="CHEBI:61036"/>
        <dbReference type="ChEBI" id="CHEBI:456216"/>
        <dbReference type="EC" id="6.3.4.20"/>
    </reaction>
</comment>
<comment type="cofactor">
    <cofactor evidence="1">
        <name>Zn(2+)</name>
        <dbReference type="ChEBI" id="CHEBI:29105"/>
    </cofactor>
    <text evidence="1">Binds 1 zinc ion per subunit.</text>
</comment>
<comment type="pathway">
    <text evidence="1">Purine metabolism; 7-cyano-7-deazaguanine biosynthesis.</text>
</comment>
<comment type="similarity">
    <text evidence="1">Belongs to the QueC family.</text>
</comment>